<comment type="function">
    <text evidence="1">Specific subunit of the TRAPP II complex, a highly conserved vesicle tethering complex that is required for the proper transport of proteins in post-Golgi trafficking pathways to the growing cell plate in mitotic active cells.</text>
</comment>
<comment type="subunit">
    <text evidence="1">Part of the multisubunit TRAPP (transport protein particle) II complex composed of BET3, BET5, TRS20, TRS23, TRS31, TRS33, TRS65, TRS85, TRS120 and TRS130.</text>
</comment>
<comment type="subcellular location">
    <subcellularLocation>
        <location evidence="1">Golgi apparatus</location>
        <location evidence="1">trans-Golgi network</location>
    </subcellularLocation>
    <subcellularLocation>
        <location evidence="1">Early endosome</location>
    </subcellularLocation>
</comment>
<comment type="similarity">
    <text evidence="3">Belongs to the TMEM1 family.</text>
</comment>
<dbReference type="EMBL" id="DP000011">
    <property type="protein sequence ID" value="ABA99538.1"/>
    <property type="molecule type" value="Genomic_DNA"/>
</dbReference>
<dbReference type="EMBL" id="AP008218">
    <property type="protein sequence ID" value="BAF30010.1"/>
    <property type="molecule type" value="Genomic_DNA"/>
</dbReference>
<dbReference type="EMBL" id="AP014968">
    <property type="protein sequence ID" value="BAT17592.1"/>
    <property type="molecule type" value="Genomic_DNA"/>
</dbReference>
<dbReference type="EMBL" id="AK072345">
    <property type="protein sequence ID" value="BAG92932.1"/>
    <property type="molecule type" value="mRNA"/>
</dbReference>
<dbReference type="RefSeq" id="XP_015620114.1">
    <property type="nucleotide sequence ID" value="XM_015764628.1"/>
</dbReference>
<dbReference type="FunCoup" id="Q2QNU0">
    <property type="interactions" value="2087"/>
</dbReference>
<dbReference type="STRING" id="39947.Q2QNU0"/>
<dbReference type="PaxDb" id="39947-Q2QNU0"/>
<dbReference type="EnsemblPlants" id="Os12t0554400-01">
    <property type="protein sequence ID" value="Os12t0554400-01"/>
    <property type="gene ID" value="Os12g0554400"/>
</dbReference>
<dbReference type="Gramene" id="Os12t0554400-01">
    <property type="protein sequence ID" value="Os12t0554400-01"/>
    <property type="gene ID" value="Os12g0554400"/>
</dbReference>
<dbReference type="KEGG" id="dosa:Os12g0554400"/>
<dbReference type="eggNOG" id="KOG1931">
    <property type="taxonomic scope" value="Eukaryota"/>
</dbReference>
<dbReference type="HOGENOM" id="CLU_006790_0_0_1"/>
<dbReference type="InParanoid" id="Q2QNU0"/>
<dbReference type="OMA" id="FFKHENY"/>
<dbReference type="OrthoDB" id="10256906at2759"/>
<dbReference type="Proteomes" id="UP000000763">
    <property type="component" value="Chromosome 12"/>
</dbReference>
<dbReference type="Proteomes" id="UP000059680">
    <property type="component" value="Chromosome 12"/>
</dbReference>
<dbReference type="ExpressionAtlas" id="Q2QNU0">
    <property type="expression patterns" value="baseline and differential"/>
</dbReference>
<dbReference type="GO" id="GO:0005829">
    <property type="term" value="C:cytosol"/>
    <property type="evidence" value="ECO:0007669"/>
    <property type="project" value="GOC"/>
</dbReference>
<dbReference type="GO" id="GO:0005769">
    <property type="term" value="C:early endosome"/>
    <property type="evidence" value="ECO:0007669"/>
    <property type="project" value="UniProtKB-SubCell"/>
</dbReference>
<dbReference type="GO" id="GO:1990071">
    <property type="term" value="C:TRAPPII protein complex"/>
    <property type="evidence" value="ECO:0000318"/>
    <property type="project" value="GO_Central"/>
</dbReference>
<dbReference type="GO" id="GO:0034498">
    <property type="term" value="P:early endosome to Golgi transport"/>
    <property type="evidence" value="ECO:0000318"/>
    <property type="project" value="GO_Central"/>
</dbReference>
<dbReference type="GO" id="GO:0006891">
    <property type="term" value="P:intra-Golgi vesicle-mediated transport"/>
    <property type="evidence" value="ECO:0000318"/>
    <property type="project" value="GO_Central"/>
</dbReference>
<dbReference type="InterPro" id="IPR022233">
    <property type="entry name" value="TRAPP_II_complex_TRAPPC10_C"/>
</dbReference>
<dbReference type="InterPro" id="IPR045126">
    <property type="entry name" value="TRAPPC10/Trs130"/>
</dbReference>
<dbReference type="InterPro" id="IPR056913">
    <property type="entry name" value="TRAPPC10/Trs130_N"/>
</dbReference>
<dbReference type="PANTHER" id="PTHR13251">
    <property type="entry name" value="EPILEPSY HOLOPROSENCEPHALY CANDIDATE 1/TMEM1"/>
    <property type="match status" value="1"/>
</dbReference>
<dbReference type="PANTHER" id="PTHR13251:SF3">
    <property type="entry name" value="TRAFFICKING PROTEIN PARTICLE COMPLEX SUBUNIT 10"/>
    <property type="match status" value="1"/>
</dbReference>
<dbReference type="Pfam" id="PF12584">
    <property type="entry name" value="TRAPPC10"/>
    <property type="match status" value="1"/>
</dbReference>
<dbReference type="Pfam" id="PF23036">
    <property type="entry name" value="TRAPPC10_1st"/>
    <property type="match status" value="1"/>
</dbReference>
<accession>Q2QNU0</accession>
<accession>A0A0P0YBB0</accession>
<protein>
    <recommendedName>
        <fullName evidence="3">Trafficking protein particle complex II-specific subunit 130 homolog</fullName>
        <shortName evidence="3">TRAPP II-specific subunit 130 homolog</shortName>
    </recommendedName>
</protein>
<reference key="1">
    <citation type="journal article" date="2005" name="BMC Biol.">
        <title>The sequence of rice chromosomes 11 and 12, rich in disease resistance genes and recent gene duplications.</title>
        <authorList>
            <consortium name="The rice chromosomes 11 and 12 sequencing consortia"/>
        </authorList>
    </citation>
    <scope>NUCLEOTIDE SEQUENCE [LARGE SCALE GENOMIC DNA]</scope>
    <source>
        <strain>cv. Nipponbare</strain>
    </source>
</reference>
<reference key="2">
    <citation type="journal article" date="2005" name="Nature">
        <title>The map-based sequence of the rice genome.</title>
        <authorList>
            <consortium name="International rice genome sequencing project (IRGSP)"/>
        </authorList>
    </citation>
    <scope>NUCLEOTIDE SEQUENCE [LARGE SCALE GENOMIC DNA]</scope>
    <source>
        <strain>cv. Nipponbare</strain>
    </source>
</reference>
<reference key="3">
    <citation type="journal article" date="2008" name="Nucleic Acids Res.">
        <title>The rice annotation project database (RAP-DB): 2008 update.</title>
        <authorList>
            <consortium name="The rice annotation project (RAP)"/>
        </authorList>
    </citation>
    <scope>GENOME REANNOTATION</scope>
    <source>
        <strain>cv. Nipponbare</strain>
    </source>
</reference>
<reference key="4">
    <citation type="journal article" date="2013" name="Rice">
        <title>Improvement of the Oryza sativa Nipponbare reference genome using next generation sequence and optical map data.</title>
        <authorList>
            <person name="Kawahara Y."/>
            <person name="de la Bastide M."/>
            <person name="Hamilton J.P."/>
            <person name="Kanamori H."/>
            <person name="McCombie W.R."/>
            <person name="Ouyang S."/>
            <person name="Schwartz D.C."/>
            <person name="Tanaka T."/>
            <person name="Wu J."/>
            <person name="Zhou S."/>
            <person name="Childs K.L."/>
            <person name="Davidson R.M."/>
            <person name="Lin H."/>
            <person name="Quesada-Ocampo L."/>
            <person name="Vaillancourt B."/>
            <person name="Sakai H."/>
            <person name="Lee S.S."/>
            <person name="Kim J."/>
            <person name="Numa H."/>
            <person name="Itoh T."/>
            <person name="Buell C.R."/>
            <person name="Matsumoto T."/>
        </authorList>
    </citation>
    <scope>GENOME REANNOTATION</scope>
    <source>
        <strain>cv. Nipponbare</strain>
    </source>
</reference>
<reference key="5">
    <citation type="journal article" date="2003" name="Science">
        <title>Collection, mapping, and annotation of over 28,000 cDNA clones from japonica rice.</title>
        <authorList>
            <consortium name="The rice full-length cDNA consortium"/>
        </authorList>
    </citation>
    <scope>NUCLEOTIDE SEQUENCE [LARGE SCALE MRNA]</scope>
    <source>
        <strain>cv. Nipponbare</strain>
    </source>
</reference>
<proteinExistence type="evidence at transcript level"/>
<sequence length="1245" mass="139308">MANYLAQFQTIKSSCDRIVVAVEDVSDLWLNVKESFEQRLPVKKACLNNKARNPVFVENLPAEFIQTTDSRLRSRFPQDQYLFWFREPYATVVLVSCEDLDEFKTILKPRLKLIVQNDEREWFIVFVSKAHPSNDQASKMAKRVYARLESDFNTKKRERCCKFDLHGPDAEFWDDFDSKMVDCIRNTLDRRVQFYEEEIRRLSEQRFTPIWNFCNFFILKESLAFMFEMTNLHEDSLREYDELELCYSESVNSPGKHREFGGLDTGDDQAALLNPGFKALTQIVQDDVFREFEFRQYIFACQAKLLFKLHRPIEVAARGYAFVVSFSKTLALQENGLPFCFREVWVITACMDLIKATTSHYDGTAVAIDSEREFCRIQGDLYSLCRIKFLRLAYLIGYGVEIEKSPVNSASLSMLPWPKPATWPSIPPDSSAETMAKEKMILQAKSREKIFNIHRKPLPLEPSLLLREANRRRAFLSVGNISELYDSGDGSGLDANSKPSPNKSASNYMARTMSGPATSETSLPVDRPMRLSEIHVAAEHALKQTVSDPNFMTSLSSLEEFEKRYMELTKGAADNYHHSWWKRHGVVLDGEIAALFFKHENYDLAAKSYEKVCALYSAEGWEELLADVLPDLAECQKILNDEAGYLTSCVKLLSLESGLFSSKERQAFQSEVVRLAHSEMKHPVPLDVSSLITFAGNPAPPLELCDGDPGTLSVAVWSAFPDDITLESLSLRLSASSSADEGLKAIKSSDARVLVPGRNIITFDIPPQKPGSYVLGALTGQIGKLSFRSHGFSQDGPVDTDEFMSFEKPTRPVLKVRKPRALVDITPAVSSALLMNELQWIGLIVKPIDYSLKDGILHIDAGAGLKIEESQMIEIETYGSDVEHVGGTDASKTSSSSTDTRKVEKVPIEDGKIKIPDWASDVTTLVWFPVRAIDDTIARGASPASPQKQSIVDGMRMIALKLEFGVFLNQVFERTIAVHFTNPFHVSTRVVDKCYDGTLLLQVILHSEVKATLHVKDIWLDLQSGFEHTGKGDGRPTSNLFPLVIAPSSRAGILFVIRLSALGDMDELEKADSMLNIKYGISGDRTTGAHSPVPVKPDDSEELVFKIAVKMKRPVLDPCVAVGFLPFSSDCLRVGQLVNMRWRVERLKNPEDASLLADEILYQVDANPQNWMVAGRKCGHVSLSNKQGSRIEITVTCVPLVSGYVHPPQLGLPHVGEANISCNPAGPHLVCVLPPTLSTSYCIPA</sequence>
<gene>
    <name evidence="3" type="primary">TRS130</name>
    <name evidence="5" type="ordered locus">Os12g0554400</name>
    <name evidence="4" type="ordered locus">LOC_Os12g36760</name>
</gene>
<feature type="chain" id="PRO_0000431451" description="Trafficking protein particle complex II-specific subunit 130 homolog">
    <location>
        <begin position="1"/>
        <end position="1245"/>
    </location>
</feature>
<feature type="region of interest" description="Disordered" evidence="2">
    <location>
        <begin position="488"/>
        <end position="524"/>
    </location>
</feature>
<feature type="region of interest" description="Disordered" evidence="2">
    <location>
        <begin position="884"/>
        <end position="903"/>
    </location>
</feature>
<feature type="compositionally biased region" description="Low complexity" evidence="2">
    <location>
        <begin position="495"/>
        <end position="507"/>
    </location>
</feature>
<feature type="compositionally biased region" description="Low complexity" evidence="2">
    <location>
        <begin position="888"/>
        <end position="898"/>
    </location>
</feature>
<evidence type="ECO:0000250" key="1">
    <source>
        <dbReference type="UniProtKB" id="F4K0C4"/>
    </source>
</evidence>
<evidence type="ECO:0000256" key="2">
    <source>
        <dbReference type="SAM" id="MobiDB-lite"/>
    </source>
</evidence>
<evidence type="ECO:0000305" key="3"/>
<evidence type="ECO:0000312" key="4">
    <source>
        <dbReference type="EMBL" id="ABA99538.1"/>
    </source>
</evidence>
<evidence type="ECO:0000312" key="5">
    <source>
        <dbReference type="EMBL" id="BAF30010.1"/>
    </source>
</evidence>
<name>TR130_ORYSJ</name>
<keyword id="KW-0967">Endosome</keyword>
<keyword id="KW-0333">Golgi apparatus</keyword>
<keyword id="KW-1185">Reference proteome</keyword>
<keyword id="KW-0813">Transport</keyword>
<organism>
    <name type="scientific">Oryza sativa subsp. japonica</name>
    <name type="common">Rice</name>
    <dbReference type="NCBI Taxonomy" id="39947"/>
    <lineage>
        <taxon>Eukaryota</taxon>
        <taxon>Viridiplantae</taxon>
        <taxon>Streptophyta</taxon>
        <taxon>Embryophyta</taxon>
        <taxon>Tracheophyta</taxon>
        <taxon>Spermatophyta</taxon>
        <taxon>Magnoliopsida</taxon>
        <taxon>Liliopsida</taxon>
        <taxon>Poales</taxon>
        <taxon>Poaceae</taxon>
        <taxon>BOP clade</taxon>
        <taxon>Oryzoideae</taxon>
        <taxon>Oryzeae</taxon>
        <taxon>Oryzinae</taxon>
        <taxon>Oryza</taxon>
        <taxon>Oryza sativa</taxon>
    </lineage>
</organism>